<sequence length="528" mass="58889">MQQNTSLYDSLNVTAAASTSEIKKAYRNAALKYHPDKNNHTEESKRKFQEICQAYEILKDNRLRALYDQYGTTDEVLIQEQQAQAQRQQAGPFSSSSNFDTEAMSFPDLSPGDLFAQFFNSSATPSSNGSKSSFNFSFNNSSTPSFSFVNGSGVNNLYSSSAKYNSNDEDHHLDRGPDIKHNLKCTLKELYMGKTAKLGLNRTRICSVCDGHGGLKKCTCKTCKGQGIQTQTRRMGPLVQSWSQTCADCGGAGVFVKNKDICQQCQGLGFIKERKILQVTVQPGSCHNQLIVLTGEGDEVISTKGGGHEKVIPGDVVITILRLKDPNFQVINYSNLICKKCKIDFMTSLCGGVVYIEGHPSGKLIKLDIIPGEILKPGCFKTVEDMGMPKFINGVRSGFGHLYVKFDVTYPERLEPENAKKIQNILANDKYIKAERSTMETADSDCYCDLEKSYDSVEEHVLSSFEAPNLNNEVIEDDDLGDLINERDSRKRNNRRFDESNINNNNETKRNKYSSPVSGFYDHDINGY</sequence>
<gene>
    <name type="primary">APJ1</name>
    <name type="ordered locus">YNL077W</name>
    <name type="ORF">N2342</name>
</gene>
<organism>
    <name type="scientific">Saccharomyces cerevisiae (strain ATCC 204508 / S288c)</name>
    <name type="common">Baker's yeast</name>
    <dbReference type="NCBI Taxonomy" id="559292"/>
    <lineage>
        <taxon>Eukaryota</taxon>
        <taxon>Fungi</taxon>
        <taxon>Dikarya</taxon>
        <taxon>Ascomycota</taxon>
        <taxon>Saccharomycotina</taxon>
        <taxon>Saccharomycetes</taxon>
        <taxon>Saccharomycetales</taxon>
        <taxon>Saccharomycetaceae</taxon>
        <taxon>Saccharomyces</taxon>
    </lineage>
</organism>
<proteinExistence type="evidence at protein level"/>
<dbReference type="EMBL" id="Z71353">
    <property type="protein sequence ID" value="CAA95951.1"/>
    <property type="molecule type" value="Genomic_DNA"/>
</dbReference>
<dbReference type="EMBL" id="AY723859">
    <property type="protein sequence ID" value="AAU09776.1"/>
    <property type="molecule type" value="Genomic_DNA"/>
</dbReference>
<dbReference type="EMBL" id="BK006947">
    <property type="protein sequence ID" value="DAA10468.1"/>
    <property type="molecule type" value="Genomic_DNA"/>
</dbReference>
<dbReference type="PIR" id="S63009">
    <property type="entry name" value="S63009"/>
</dbReference>
<dbReference type="RefSeq" id="NP_014322.1">
    <property type="nucleotide sequence ID" value="NM_001182915.1"/>
</dbReference>
<dbReference type="SMR" id="P53940"/>
<dbReference type="BioGRID" id="35746">
    <property type="interactions" value="671"/>
</dbReference>
<dbReference type="DIP" id="DIP-7817N"/>
<dbReference type="FunCoup" id="P53940">
    <property type="interactions" value="583"/>
</dbReference>
<dbReference type="IntAct" id="P53940">
    <property type="interactions" value="7"/>
</dbReference>
<dbReference type="MINT" id="P53940"/>
<dbReference type="STRING" id="4932.YNL077W"/>
<dbReference type="GlyGen" id="P53940">
    <property type="glycosylation" value="2 sites"/>
</dbReference>
<dbReference type="iPTMnet" id="P53940"/>
<dbReference type="PaxDb" id="4932-YNL077W"/>
<dbReference type="PeptideAtlas" id="P53940"/>
<dbReference type="EnsemblFungi" id="YNL077W_mRNA">
    <property type="protein sequence ID" value="YNL077W"/>
    <property type="gene ID" value="YNL077W"/>
</dbReference>
<dbReference type="GeneID" id="855647"/>
<dbReference type="KEGG" id="sce:YNL077W"/>
<dbReference type="AGR" id="SGD:S000005021"/>
<dbReference type="SGD" id="S000005021">
    <property type="gene designation" value="APJ1"/>
</dbReference>
<dbReference type="VEuPathDB" id="FungiDB:YNL077W"/>
<dbReference type="eggNOG" id="KOG0712">
    <property type="taxonomic scope" value="Eukaryota"/>
</dbReference>
<dbReference type="GeneTree" id="ENSGT00940000170598"/>
<dbReference type="HOGENOM" id="CLU_017633_10_0_1"/>
<dbReference type="InParanoid" id="P53940"/>
<dbReference type="OMA" id="RGPDIKH"/>
<dbReference type="OrthoDB" id="550424at2759"/>
<dbReference type="BioCyc" id="YEAST:G3O-33106-MONOMER"/>
<dbReference type="Reactome" id="R-SCE-3371497">
    <property type="pathway name" value="HSP90 chaperone cycle for steroid hormone receptors (SHR) in the presence of ligand"/>
</dbReference>
<dbReference type="BioGRID-ORCS" id="855647">
    <property type="hits" value="1 hit in 10 CRISPR screens"/>
</dbReference>
<dbReference type="PRO" id="PR:P53940"/>
<dbReference type="Proteomes" id="UP000002311">
    <property type="component" value="Chromosome XIV"/>
</dbReference>
<dbReference type="RNAct" id="P53940">
    <property type="molecule type" value="protein"/>
</dbReference>
<dbReference type="GO" id="GO:0005737">
    <property type="term" value="C:cytoplasm"/>
    <property type="evidence" value="ECO:0007005"/>
    <property type="project" value="SGD"/>
</dbReference>
<dbReference type="GO" id="GO:0005829">
    <property type="term" value="C:cytosol"/>
    <property type="evidence" value="ECO:0000318"/>
    <property type="project" value="GO_Central"/>
</dbReference>
<dbReference type="GO" id="GO:0005739">
    <property type="term" value="C:mitochondrion"/>
    <property type="evidence" value="ECO:0007005"/>
    <property type="project" value="SGD"/>
</dbReference>
<dbReference type="GO" id="GO:0042405">
    <property type="term" value="C:nuclear inclusion body"/>
    <property type="evidence" value="ECO:0000314"/>
    <property type="project" value="SGD"/>
</dbReference>
<dbReference type="GO" id="GO:0034399">
    <property type="term" value="C:nuclear periphery"/>
    <property type="evidence" value="ECO:0000314"/>
    <property type="project" value="SGD"/>
</dbReference>
<dbReference type="GO" id="GO:0005634">
    <property type="term" value="C:nucleus"/>
    <property type="evidence" value="ECO:0007005"/>
    <property type="project" value="SGD"/>
</dbReference>
<dbReference type="GO" id="GO:0001671">
    <property type="term" value="F:ATPase activator activity"/>
    <property type="evidence" value="ECO:0000314"/>
    <property type="project" value="SGD"/>
</dbReference>
<dbReference type="GO" id="GO:0030544">
    <property type="term" value="F:Hsp70 protein binding"/>
    <property type="evidence" value="ECO:0007669"/>
    <property type="project" value="InterPro"/>
</dbReference>
<dbReference type="GO" id="GO:0051087">
    <property type="term" value="F:protein-folding chaperone binding"/>
    <property type="evidence" value="ECO:0000318"/>
    <property type="project" value="GO_Central"/>
</dbReference>
<dbReference type="GO" id="GO:0051082">
    <property type="term" value="F:unfolded protein binding"/>
    <property type="evidence" value="ECO:0000315"/>
    <property type="project" value="SGD"/>
</dbReference>
<dbReference type="GO" id="GO:0008270">
    <property type="term" value="F:zinc ion binding"/>
    <property type="evidence" value="ECO:0007669"/>
    <property type="project" value="UniProtKB-KW"/>
</dbReference>
<dbReference type="GO" id="GO:0042026">
    <property type="term" value="P:protein refolding"/>
    <property type="evidence" value="ECO:0000318"/>
    <property type="project" value="GO_Central"/>
</dbReference>
<dbReference type="GO" id="GO:0016925">
    <property type="term" value="P:protein sumoylation"/>
    <property type="evidence" value="ECO:0000316"/>
    <property type="project" value="SGD"/>
</dbReference>
<dbReference type="GO" id="GO:0043335">
    <property type="term" value="P:protein unfolding"/>
    <property type="evidence" value="ECO:0000315"/>
    <property type="project" value="SGD"/>
</dbReference>
<dbReference type="CDD" id="cd06257">
    <property type="entry name" value="DnaJ"/>
    <property type="match status" value="1"/>
</dbReference>
<dbReference type="CDD" id="cd10747">
    <property type="entry name" value="DnaJ_C"/>
    <property type="match status" value="1"/>
</dbReference>
<dbReference type="CDD" id="cd10719">
    <property type="entry name" value="DnaJ_zf"/>
    <property type="match status" value="1"/>
</dbReference>
<dbReference type="FunFam" id="1.10.287.110:FF:000155">
    <property type="entry name" value="Apj1p"/>
    <property type="match status" value="1"/>
</dbReference>
<dbReference type="FunFam" id="2.10.230.10:FF:000008">
    <property type="entry name" value="Apj1p"/>
    <property type="match status" value="1"/>
</dbReference>
<dbReference type="FunFam" id="2.60.260.20:FF:000058">
    <property type="entry name" value="Apj1p"/>
    <property type="match status" value="1"/>
</dbReference>
<dbReference type="Gene3D" id="1.10.287.110">
    <property type="entry name" value="DnaJ domain"/>
    <property type="match status" value="1"/>
</dbReference>
<dbReference type="Gene3D" id="2.10.230.10">
    <property type="entry name" value="Heat shock protein DnaJ, cysteine-rich domain"/>
    <property type="match status" value="1"/>
</dbReference>
<dbReference type="Gene3D" id="2.60.260.20">
    <property type="entry name" value="Urease metallochaperone UreE, N-terminal domain"/>
    <property type="match status" value="2"/>
</dbReference>
<dbReference type="InterPro" id="IPR002939">
    <property type="entry name" value="DnaJ_C"/>
</dbReference>
<dbReference type="InterPro" id="IPR001623">
    <property type="entry name" value="DnaJ_domain"/>
</dbReference>
<dbReference type="InterPro" id="IPR018253">
    <property type="entry name" value="DnaJ_domain_CS"/>
</dbReference>
<dbReference type="InterPro" id="IPR044713">
    <property type="entry name" value="DNJA1/2-like"/>
</dbReference>
<dbReference type="InterPro" id="IPR008971">
    <property type="entry name" value="HSP40/DnaJ_pept-bd"/>
</dbReference>
<dbReference type="InterPro" id="IPR001305">
    <property type="entry name" value="HSP_DnaJ_Cys-rich_dom"/>
</dbReference>
<dbReference type="InterPro" id="IPR036410">
    <property type="entry name" value="HSP_DnaJ_Cys-rich_dom_sf"/>
</dbReference>
<dbReference type="InterPro" id="IPR036869">
    <property type="entry name" value="J_dom_sf"/>
</dbReference>
<dbReference type="PANTHER" id="PTHR43888">
    <property type="entry name" value="DNAJ-LIKE-2, ISOFORM A-RELATED"/>
    <property type="match status" value="1"/>
</dbReference>
<dbReference type="Pfam" id="PF00226">
    <property type="entry name" value="DnaJ"/>
    <property type="match status" value="1"/>
</dbReference>
<dbReference type="Pfam" id="PF01556">
    <property type="entry name" value="DnaJ_C"/>
    <property type="match status" value="1"/>
</dbReference>
<dbReference type="Pfam" id="PF00684">
    <property type="entry name" value="DnaJ_CXXCXGXG"/>
    <property type="match status" value="1"/>
</dbReference>
<dbReference type="PRINTS" id="PR00625">
    <property type="entry name" value="JDOMAIN"/>
</dbReference>
<dbReference type="SMART" id="SM00271">
    <property type="entry name" value="DnaJ"/>
    <property type="match status" value="1"/>
</dbReference>
<dbReference type="SUPFAM" id="SSF46565">
    <property type="entry name" value="Chaperone J-domain"/>
    <property type="match status" value="1"/>
</dbReference>
<dbReference type="SUPFAM" id="SSF57938">
    <property type="entry name" value="DnaJ/Hsp40 cysteine-rich domain"/>
    <property type="match status" value="1"/>
</dbReference>
<dbReference type="SUPFAM" id="SSF49493">
    <property type="entry name" value="HSP40/DnaJ peptide-binding domain"/>
    <property type="match status" value="2"/>
</dbReference>
<dbReference type="PROSITE" id="PS00636">
    <property type="entry name" value="DNAJ_1"/>
    <property type="match status" value="1"/>
</dbReference>
<dbReference type="PROSITE" id="PS50076">
    <property type="entry name" value="DNAJ_2"/>
    <property type="match status" value="1"/>
</dbReference>
<dbReference type="PROSITE" id="PS51188">
    <property type="entry name" value="ZF_CR"/>
    <property type="match status" value="1"/>
</dbReference>
<reference key="1">
    <citation type="journal article" date="1996" name="Yeast">
        <title>Sequencing a cosmid clone of Saccharomyces cerevisiae chromosome XIV reveals 12 new open reading frames (ORFs) and an ancient duplication of six ORFs.</title>
        <authorList>
            <person name="Poehlmann R."/>
            <person name="Philippsen P."/>
        </authorList>
    </citation>
    <scope>NUCLEOTIDE SEQUENCE [GENOMIC DNA]</scope>
    <source>
        <strain>ATCC 96604 / S288c / FY1679</strain>
    </source>
</reference>
<reference key="2">
    <citation type="journal article" date="1997" name="Nature">
        <title>The nucleotide sequence of Saccharomyces cerevisiae chromosome XIV and its evolutionary implications.</title>
        <authorList>
            <person name="Philippsen P."/>
            <person name="Kleine K."/>
            <person name="Poehlmann R."/>
            <person name="Duesterhoeft A."/>
            <person name="Hamberg K."/>
            <person name="Hegemann J.H."/>
            <person name="Obermaier B."/>
            <person name="Urrestarazu L.A."/>
            <person name="Aert R."/>
            <person name="Albermann K."/>
            <person name="Altmann R."/>
            <person name="Andre B."/>
            <person name="Baladron V."/>
            <person name="Ballesta J.P.G."/>
            <person name="Becam A.-M."/>
            <person name="Beinhauer J.D."/>
            <person name="Boskovic J."/>
            <person name="Buitrago M.J."/>
            <person name="Bussereau F."/>
            <person name="Coster F."/>
            <person name="Crouzet M."/>
            <person name="D'Angelo M."/>
            <person name="Dal Pero F."/>
            <person name="De Antoni A."/>
            <person name="del Rey F."/>
            <person name="Doignon F."/>
            <person name="Domdey H."/>
            <person name="Dubois E."/>
            <person name="Fiedler T.A."/>
            <person name="Fleig U."/>
            <person name="Floeth M."/>
            <person name="Fritz C."/>
            <person name="Gaillardin C."/>
            <person name="Garcia-Cantalejo J.M."/>
            <person name="Glansdorff N."/>
            <person name="Goffeau A."/>
            <person name="Gueldener U."/>
            <person name="Herbert C.J."/>
            <person name="Heumann K."/>
            <person name="Heuss-Neitzel D."/>
            <person name="Hilbert H."/>
            <person name="Hinni K."/>
            <person name="Iraqui Houssaini I."/>
            <person name="Jacquet M."/>
            <person name="Jimenez A."/>
            <person name="Jonniaux J.-L."/>
            <person name="Karpfinger-Hartl L."/>
            <person name="Lanfranchi G."/>
            <person name="Lepingle A."/>
            <person name="Levesque H."/>
            <person name="Lyck R."/>
            <person name="Maftahi M."/>
            <person name="Mallet L."/>
            <person name="Maurer C.T.C."/>
            <person name="Messenguy F."/>
            <person name="Mewes H.-W."/>
            <person name="Moestl D."/>
            <person name="Nasr F."/>
            <person name="Nicaud J.-M."/>
            <person name="Niedenthal R.K."/>
            <person name="Pandolfo D."/>
            <person name="Pierard A."/>
            <person name="Piravandi E."/>
            <person name="Planta R.J."/>
            <person name="Pohl T.M."/>
            <person name="Purnelle B."/>
            <person name="Rebischung C."/>
            <person name="Remacha M.A."/>
            <person name="Revuelta J.L."/>
            <person name="Rinke M."/>
            <person name="Saiz J.E."/>
            <person name="Sartorello F."/>
            <person name="Scherens B."/>
            <person name="Sen-Gupta M."/>
            <person name="Soler-Mira A."/>
            <person name="Urbanus J.H.M."/>
            <person name="Valle G."/>
            <person name="Van Dyck L."/>
            <person name="Verhasselt P."/>
            <person name="Vierendeels F."/>
            <person name="Vissers S."/>
            <person name="Voet M."/>
            <person name="Volckaert G."/>
            <person name="Wach A."/>
            <person name="Wambutt R."/>
            <person name="Wedler H."/>
            <person name="Zollner A."/>
            <person name="Hani J."/>
        </authorList>
    </citation>
    <scope>NUCLEOTIDE SEQUENCE [LARGE SCALE GENOMIC DNA]</scope>
    <source>
        <strain>ATCC 204508 / S288c</strain>
    </source>
</reference>
<reference key="3">
    <citation type="journal article" date="2014" name="G3 (Bethesda)">
        <title>The reference genome sequence of Saccharomyces cerevisiae: Then and now.</title>
        <authorList>
            <person name="Engel S.R."/>
            <person name="Dietrich F.S."/>
            <person name="Fisk D.G."/>
            <person name="Binkley G."/>
            <person name="Balakrishnan R."/>
            <person name="Costanzo M.C."/>
            <person name="Dwight S.S."/>
            <person name="Hitz B.C."/>
            <person name="Karra K."/>
            <person name="Nash R.S."/>
            <person name="Weng S."/>
            <person name="Wong E.D."/>
            <person name="Lloyd P."/>
            <person name="Skrzypek M.S."/>
            <person name="Miyasato S.R."/>
            <person name="Simison M."/>
            <person name="Cherry J.M."/>
        </authorList>
    </citation>
    <scope>GENOME REANNOTATION</scope>
    <source>
        <strain>ATCC 204508 / S288c</strain>
    </source>
</reference>
<reference key="4">
    <citation type="journal article" date="2007" name="Genome Res.">
        <title>Approaching a complete repository of sequence-verified protein-encoding clones for Saccharomyces cerevisiae.</title>
        <authorList>
            <person name="Hu Y."/>
            <person name="Rolfs A."/>
            <person name="Bhullar B."/>
            <person name="Murthy T.V.S."/>
            <person name="Zhu C."/>
            <person name="Berger M.F."/>
            <person name="Camargo A.A."/>
            <person name="Kelley F."/>
            <person name="McCarron S."/>
            <person name="Jepson D."/>
            <person name="Richardson A."/>
            <person name="Raphael J."/>
            <person name="Moreira D."/>
            <person name="Taycher E."/>
            <person name="Zuo D."/>
            <person name="Mohr S."/>
            <person name="Kane M.F."/>
            <person name="Williamson J."/>
            <person name="Simpson A.J.G."/>
            <person name="Bulyk M.L."/>
            <person name="Harlow E."/>
            <person name="Marsischky G."/>
            <person name="Kolodner R.D."/>
            <person name="LaBaer J."/>
        </authorList>
    </citation>
    <scope>NUCLEOTIDE SEQUENCE [GENOMIC DNA]</scope>
    <source>
        <strain>ATCC 204508 / S288c</strain>
    </source>
</reference>
<reference key="5">
    <citation type="journal article" date="2003" name="Nature">
        <title>Global analysis of protein localization in budding yeast.</title>
        <authorList>
            <person name="Huh W.-K."/>
            <person name="Falvo J.V."/>
            <person name="Gerke L.C."/>
            <person name="Carroll A.S."/>
            <person name="Howson R.W."/>
            <person name="Weissman J.S."/>
            <person name="O'Shea E.K."/>
        </authorList>
    </citation>
    <scope>SUBCELLULAR LOCATION [LARGE SCALE ANALYSIS]</scope>
</reference>
<reference key="6">
    <citation type="journal article" date="2003" name="Nature">
        <title>Global analysis of protein expression in yeast.</title>
        <authorList>
            <person name="Ghaemmaghami S."/>
            <person name="Huh W.-K."/>
            <person name="Bower K."/>
            <person name="Howson R.W."/>
            <person name="Belle A."/>
            <person name="Dephoure N."/>
            <person name="O'Shea E.K."/>
            <person name="Weissman J.S."/>
        </authorList>
    </citation>
    <scope>LEVEL OF PROTEIN EXPRESSION [LARGE SCALE ANALYSIS]</scope>
</reference>
<reference key="7">
    <citation type="journal article" date="2004" name="EMBO Rep.">
        <title>The J-protein family: modulating protein assembly, disassembly and translocation.</title>
        <authorList>
            <person name="Walsh P."/>
            <person name="Bursac D."/>
            <person name="Law Y.C."/>
            <person name="Cyr D."/>
            <person name="Lithgow T."/>
        </authorList>
    </citation>
    <scope>DOMAIN</scope>
</reference>
<reference key="8">
    <citation type="journal article" date="2007" name="Proc. Natl. Acad. Sci. U.S.A.">
        <title>Network of general and specialty J protein chaperones of the yeast cytosol.</title>
        <authorList>
            <person name="Sahi C."/>
            <person name="Craig E.A."/>
        </authorList>
    </citation>
    <scope>FUNCTION</scope>
</reference>
<reference key="9">
    <citation type="journal article" date="2008" name="Mol. Cell. Proteomics">
        <title>A multidimensional chromatography technology for in-depth phosphoproteome analysis.</title>
        <authorList>
            <person name="Albuquerque C.P."/>
            <person name="Smolka M.B."/>
            <person name="Payne S.H."/>
            <person name="Bafna V."/>
            <person name="Eng J."/>
            <person name="Zhou H."/>
        </authorList>
    </citation>
    <scope>IDENTIFICATION BY MASS SPECTROMETRY [LARGE SCALE ANALYSIS]</scope>
</reference>
<reference key="10">
    <citation type="journal article" date="2009" name="Science">
        <title>Global analysis of Cdk1 substrate phosphorylation sites provides insights into evolution.</title>
        <authorList>
            <person name="Holt L.J."/>
            <person name="Tuch B.B."/>
            <person name="Villen J."/>
            <person name="Johnson A.D."/>
            <person name="Gygi S.P."/>
            <person name="Morgan D.O."/>
        </authorList>
    </citation>
    <scope>IDENTIFICATION BY MASS SPECTROMETRY [LARGE SCALE ANALYSIS]</scope>
</reference>
<keyword id="KW-0143">Chaperone</keyword>
<keyword id="KW-0963">Cytoplasm</keyword>
<keyword id="KW-0479">Metal-binding</keyword>
<keyword id="KW-0539">Nucleus</keyword>
<keyword id="KW-1185">Reference proteome</keyword>
<keyword id="KW-0677">Repeat</keyword>
<keyword id="KW-0862">Zinc</keyword>
<keyword id="KW-0863">Zinc-finger</keyword>
<protein>
    <recommendedName>
        <fullName>J domain-containing protein APJ1</fullName>
    </recommendedName>
</protein>
<feature type="chain" id="PRO_0000071155" description="J domain-containing protein APJ1">
    <location>
        <begin position="1"/>
        <end position="528"/>
    </location>
</feature>
<feature type="domain" description="J" evidence="1">
    <location>
        <begin position="4"/>
        <end position="73"/>
    </location>
</feature>
<feature type="repeat" description="CXXCXGXG motif">
    <location>
        <begin position="206"/>
        <end position="213"/>
    </location>
</feature>
<feature type="repeat" description="CXXCXGXG motif">
    <location>
        <begin position="218"/>
        <end position="225"/>
    </location>
</feature>
<feature type="repeat" description="CXXCXGXG motif">
    <location>
        <begin position="246"/>
        <end position="253"/>
    </location>
</feature>
<feature type="repeat" description="CXXCXGXG motif">
    <location>
        <begin position="262"/>
        <end position="269"/>
    </location>
</feature>
<feature type="zinc finger region" description="CR-type" evidence="2">
    <location>
        <begin position="193"/>
        <end position="274"/>
    </location>
</feature>
<feature type="region of interest" description="Disordered" evidence="3">
    <location>
        <begin position="485"/>
        <end position="528"/>
    </location>
</feature>
<feature type="compositionally biased region" description="Basic and acidic residues" evidence="3">
    <location>
        <begin position="485"/>
        <end position="499"/>
    </location>
</feature>
<evidence type="ECO:0000255" key="1">
    <source>
        <dbReference type="PROSITE-ProRule" id="PRU00286"/>
    </source>
</evidence>
<evidence type="ECO:0000255" key="2">
    <source>
        <dbReference type="PROSITE-ProRule" id="PRU00546"/>
    </source>
</evidence>
<evidence type="ECO:0000256" key="3">
    <source>
        <dbReference type="SAM" id="MobiDB-lite"/>
    </source>
</evidence>
<evidence type="ECO:0000269" key="4">
    <source>
    </source>
</evidence>
<evidence type="ECO:0000269" key="5">
    <source>
    </source>
</evidence>
<evidence type="ECO:0000269" key="6">
    <source>
    </source>
</evidence>
<comment type="function">
    <text evidence="6">Putative chaperone involved in protein folding. Interferes with propagation of [PSI+] prion when overproduced.</text>
</comment>
<comment type="interaction">
    <interactant intactId="EBI-2612341">
        <id>P53940</id>
    </interactant>
    <interactant intactId="EBI-8591">
        <id>P10591</id>
        <label>SSA1</label>
    </interactant>
    <organismsDiffer>false</organismsDiffer>
    <experiments>2</experiments>
</comment>
<comment type="interaction">
    <interactant intactId="EBI-2612341">
        <id>P53940</id>
    </interactant>
    <interactant intactId="EBI-8603">
        <id>P10592</id>
        <label>SSA2</label>
    </interactant>
    <organismsDiffer>false</organismsDiffer>
    <experiments>2</experiments>
</comment>
<comment type="subcellular location">
    <subcellularLocation>
        <location evidence="4">Cytoplasm</location>
    </subcellularLocation>
    <subcellularLocation>
        <location evidence="4">Nucleus</location>
    </subcellularLocation>
</comment>
<comment type="miscellaneous">
    <text evidence="5">Present with 125 molecules/cell in log phase SD medium.</text>
</comment>
<name>APJ1_YEAST</name>
<accession>P53940</accession>
<accession>D6W1A2</accession>